<protein>
    <recommendedName>
        <fullName evidence="1">Single-stranded DNA-binding protein</fullName>
        <shortName evidence="1">SSB</shortName>
    </recommendedName>
</protein>
<name>SSB_XYLFT</name>
<dbReference type="EMBL" id="AE009442">
    <property type="protein sequence ID" value="AAO28498.1"/>
    <property type="molecule type" value="Genomic_DNA"/>
</dbReference>
<dbReference type="RefSeq" id="WP_004089231.1">
    <property type="nucleotide sequence ID" value="NC_004556.1"/>
</dbReference>
<dbReference type="SMR" id="Q87DQ5"/>
<dbReference type="KEGG" id="xft:PD_0626"/>
<dbReference type="HOGENOM" id="CLU_078758_0_2_6"/>
<dbReference type="Proteomes" id="UP000002516">
    <property type="component" value="Chromosome"/>
</dbReference>
<dbReference type="GO" id="GO:0009295">
    <property type="term" value="C:nucleoid"/>
    <property type="evidence" value="ECO:0007669"/>
    <property type="project" value="TreeGrafter"/>
</dbReference>
<dbReference type="GO" id="GO:0003697">
    <property type="term" value="F:single-stranded DNA binding"/>
    <property type="evidence" value="ECO:0007669"/>
    <property type="project" value="UniProtKB-UniRule"/>
</dbReference>
<dbReference type="GO" id="GO:0006310">
    <property type="term" value="P:DNA recombination"/>
    <property type="evidence" value="ECO:0007669"/>
    <property type="project" value="UniProtKB-UniRule"/>
</dbReference>
<dbReference type="GO" id="GO:0006281">
    <property type="term" value="P:DNA repair"/>
    <property type="evidence" value="ECO:0007669"/>
    <property type="project" value="UniProtKB-UniRule"/>
</dbReference>
<dbReference type="GO" id="GO:0006260">
    <property type="term" value="P:DNA replication"/>
    <property type="evidence" value="ECO:0007669"/>
    <property type="project" value="UniProtKB-UniRule"/>
</dbReference>
<dbReference type="CDD" id="cd04496">
    <property type="entry name" value="SSB_OBF"/>
    <property type="match status" value="1"/>
</dbReference>
<dbReference type="Gene3D" id="2.40.50.140">
    <property type="entry name" value="Nucleic acid-binding proteins"/>
    <property type="match status" value="1"/>
</dbReference>
<dbReference type="HAMAP" id="MF_00984">
    <property type="entry name" value="SSB"/>
    <property type="match status" value="1"/>
</dbReference>
<dbReference type="InterPro" id="IPR012340">
    <property type="entry name" value="NA-bd_OB-fold"/>
</dbReference>
<dbReference type="InterPro" id="IPR000424">
    <property type="entry name" value="Primosome_PriB/ssb"/>
</dbReference>
<dbReference type="InterPro" id="IPR011344">
    <property type="entry name" value="ssDNA-bd"/>
</dbReference>
<dbReference type="NCBIfam" id="NF006445">
    <property type="entry name" value="PRK08763.1"/>
    <property type="match status" value="1"/>
</dbReference>
<dbReference type="NCBIfam" id="TIGR00621">
    <property type="entry name" value="ssb"/>
    <property type="match status" value="1"/>
</dbReference>
<dbReference type="PANTHER" id="PTHR10302">
    <property type="entry name" value="SINGLE-STRANDED DNA-BINDING PROTEIN"/>
    <property type="match status" value="1"/>
</dbReference>
<dbReference type="PANTHER" id="PTHR10302:SF27">
    <property type="entry name" value="SINGLE-STRANDED DNA-BINDING PROTEIN"/>
    <property type="match status" value="1"/>
</dbReference>
<dbReference type="Pfam" id="PF00436">
    <property type="entry name" value="SSB"/>
    <property type="match status" value="1"/>
</dbReference>
<dbReference type="PIRSF" id="PIRSF002070">
    <property type="entry name" value="SSB"/>
    <property type="match status" value="1"/>
</dbReference>
<dbReference type="SUPFAM" id="SSF50249">
    <property type="entry name" value="Nucleic acid-binding proteins"/>
    <property type="match status" value="1"/>
</dbReference>
<dbReference type="PROSITE" id="PS50935">
    <property type="entry name" value="SSB"/>
    <property type="match status" value="1"/>
</dbReference>
<feature type="chain" id="PRO_0000096145" description="Single-stranded DNA-binding protein">
    <location>
        <begin position="1"/>
        <end position="164"/>
    </location>
</feature>
<feature type="domain" description="SSB" evidence="1">
    <location>
        <begin position="5"/>
        <end position="109"/>
    </location>
</feature>
<feature type="region of interest" description="Disordered" evidence="2">
    <location>
        <begin position="108"/>
        <end position="164"/>
    </location>
</feature>
<feature type="short sequence motif" description="Important for interaction with partner proteins" evidence="1">
    <location>
        <begin position="159"/>
        <end position="164"/>
    </location>
</feature>
<feature type="compositionally biased region" description="Gly residues" evidence="2">
    <location>
        <begin position="111"/>
        <end position="122"/>
    </location>
</feature>
<keyword id="KW-0227">DNA damage</keyword>
<keyword id="KW-0233">DNA recombination</keyword>
<keyword id="KW-0234">DNA repair</keyword>
<keyword id="KW-0235">DNA replication</keyword>
<keyword id="KW-0238">DNA-binding</keyword>
<keyword id="KW-1185">Reference proteome</keyword>
<gene>
    <name type="primary">ssb</name>
    <name type="ordered locus">PD_0626</name>
</gene>
<sequence length="164" mass="18227">MARGINKVILVGNLGNDPDIKYTQGGMTITTISLATTSVRKDKDGNTQERTEWHRVKFFGKLGEIAGEYLRKGSQCYIEGSIRYDKFTGQDGQERYVTEIVADEMQMLGGRSDGGGMGGGGERPQRQTSQRQDYAPRRQTRQPSQSPQSSPPPMDDFADDDIPF</sequence>
<proteinExistence type="inferred from homology"/>
<comment type="function">
    <text evidence="1">Plays an important role in DNA replication, recombination and repair. Binds to ssDNA and to an array of partner proteins to recruit them to their sites of action during DNA metabolism.</text>
</comment>
<comment type="subunit">
    <text evidence="1">Homotetramer.</text>
</comment>
<accession>Q87DQ5</accession>
<reference key="1">
    <citation type="journal article" date="2003" name="J. Bacteriol.">
        <title>Comparative analyses of the complete genome sequences of Pierce's disease and citrus variegated chlorosis strains of Xylella fastidiosa.</title>
        <authorList>
            <person name="Van Sluys M.A."/>
            <person name="de Oliveira M.C."/>
            <person name="Monteiro-Vitorello C.B."/>
            <person name="Miyaki C.Y."/>
            <person name="Furlan L.R."/>
            <person name="Camargo L.E.A."/>
            <person name="da Silva A.C.R."/>
            <person name="Moon D.H."/>
            <person name="Takita M.A."/>
            <person name="Lemos E.G.M."/>
            <person name="Machado M.A."/>
            <person name="Ferro M.I.T."/>
            <person name="da Silva F.R."/>
            <person name="Goldman M.H.S."/>
            <person name="Goldman G.H."/>
            <person name="Lemos M.V.F."/>
            <person name="El-Dorry H."/>
            <person name="Tsai S.M."/>
            <person name="Carrer H."/>
            <person name="Carraro D.M."/>
            <person name="de Oliveira R.C."/>
            <person name="Nunes L.R."/>
            <person name="Siqueira W.J."/>
            <person name="Coutinho L.L."/>
            <person name="Kimura E.T."/>
            <person name="Ferro E.S."/>
            <person name="Harakava R."/>
            <person name="Kuramae E.E."/>
            <person name="Marino C.L."/>
            <person name="Giglioti E."/>
            <person name="Abreu I.L."/>
            <person name="Alves L.M.C."/>
            <person name="do Amaral A.M."/>
            <person name="Baia G.S."/>
            <person name="Blanco S.R."/>
            <person name="Brito M.S."/>
            <person name="Cannavan F.S."/>
            <person name="Celestino A.V."/>
            <person name="da Cunha A.F."/>
            <person name="Fenille R.C."/>
            <person name="Ferro J.A."/>
            <person name="Formighieri E.F."/>
            <person name="Kishi L.T."/>
            <person name="Leoni S.G."/>
            <person name="Oliveira A.R."/>
            <person name="Rosa V.E. Jr."/>
            <person name="Sassaki F.T."/>
            <person name="Sena J.A.D."/>
            <person name="de Souza A.A."/>
            <person name="Truffi D."/>
            <person name="Tsukumo F."/>
            <person name="Yanai G.M."/>
            <person name="Zaros L.G."/>
            <person name="Civerolo E.L."/>
            <person name="Simpson A.J.G."/>
            <person name="Almeida N.F. Jr."/>
            <person name="Setubal J.C."/>
            <person name="Kitajima J.P."/>
        </authorList>
    </citation>
    <scope>NUCLEOTIDE SEQUENCE [LARGE SCALE GENOMIC DNA]</scope>
    <source>
        <strain>Temecula1 / ATCC 700964</strain>
    </source>
</reference>
<evidence type="ECO:0000255" key="1">
    <source>
        <dbReference type="HAMAP-Rule" id="MF_00984"/>
    </source>
</evidence>
<evidence type="ECO:0000256" key="2">
    <source>
        <dbReference type="SAM" id="MobiDB-lite"/>
    </source>
</evidence>
<organism>
    <name type="scientific">Xylella fastidiosa (strain Temecula1 / ATCC 700964)</name>
    <dbReference type="NCBI Taxonomy" id="183190"/>
    <lineage>
        <taxon>Bacteria</taxon>
        <taxon>Pseudomonadati</taxon>
        <taxon>Pseudomonadota</taxon>
        <taxon>Gammaproteobacteria</taxon>
        <taxon>Lysobacterales</taxon>
        <taxon>Lysobacteraceae</taxon>
        <taxon>Xylella</taxon>
    </lineage>
</organism>